<feature type="chain" id="PRO_0000309923" description="Large ribosomal subunit protein uL2">
    <location>
        <begin position="1"/>
        <end position="276"/>
    </location>
</feature>
<feature type="region of interest" description="Disordered" evidence="2">
    <location>
        <begin position="224"/>
        <end position="276"/>
    </location>
</feature>
<feature type="compositionally biased region" description="Basic residues" evidence="2">
    <location>
        <begin position="258"/>
        <end position="276"/>
    </location>
</feature>
<organism>
    <name type="scientific">Geobacillus thermodenitrificans (strain NG80-2)</name>
    <dbReference type="NCBI Taxonomy" id="420246"/>
    <lineage>
        <taxon>Bacteria</taxon>
        <taxon>Bacillati</taxon>
        <taxon>Bacillota</taxon>
        <taxon>Bacilli</taxon>
        <taxon>Bacillales</taxon>
        <taxon>Anoxybacillaceae</taxon>
        <taxon>Geobacillus</taxon>
    </lineage>
</organism>
<sequence length="276" mass="30302">MAIKKYKPTSNGRRGMTVLDFSEITTDQPEKSLLAPLKKKAGRNNQGKITVRHQGGGHKRQYRIIDFKRDKDGIPGRVATIEYDPNRSANIALINYADGEKRYILAPKNLKVGMEIMSGPNADIKVGNALPLENIPVGTLVHNIELKPGRGGQLVRAAGTSAQVLGKEGKYVIIRLASGEVRMILGKCRATVGEVGNEQHELVNIGKAGRARWLGIRPTVRGSVMNPVDHPHGGGEGKAPIGRKSPMTPWGKPTLGYKTRKKKNKSDKFIIRRRKK</sequence>
<reference key="1">
    <citation type="journal article" date="2007" name="Proc. Natl. Acad. Sci. U.S.A.">
        <title>Genome and proteome of long-chain alkane degrading Geobacillus thermodenitrificans NG80-2 isolated from a deep-subsurface oil reservoir.</title>
        <authorList>
            <person name="Feng L."/>
            <person name="Wang W."/>
            <person name="Cheng J."/>
            <person name="Ren Y."/>
            <person name="Zhao G."/>
            <person name="Gao C."/>
            <person name="Tang Y."/>
            <person name="Liu X."/>
            <person name="Han W."/>
            <person name="Peng X."/>
            <person name="Liu R."/>
            <person name="Wang L."/>
        </authorList>
    </citation>
    <scope>NUCLEOTIDE SEQUENCE [LARGE SCALE GENOMIC DNA]</scope>
    <source>
        <strain>NG80-2</strain>
    </source>
</reference>
<dbReference type="EMBL" id="CP000557">
    <property type="protein sequence ID" value="ABO65496.1"/>
    <property type="molecule type" value="Genomic_DNA"/>
</dbReference>
<dbReference type="RefSeq" id="WP_008881941.1">
    <property type="nucleotide sequence ID" value="NC_009328.1"/>
</dbReference>
<dbReference type="SMR" id="A4IJJ2"/>
<dbReference type="GeneID" id="87622323"/>
<dbReference type="KEGG" id="gtn:GTNG_0109"/>
<dbReference type="eggNOG" id="COG0090">
    <property type="taxonomic scope" value="Bacteria"/>
</dbReference>
<dbReference type="HOGENOM" id="CLU_036235_2_1_9"/>
<dbReference type="Proteomes" id="UP000001578">
    <property type="component" value="Chromosome"/>
</dbReference>
<dbReference type="GO" id="GO:0015934">
    <property type="term" value="C:large ribosomal subunit"/>
    <property type="evidence" value="ECO:0007669"/>
    <property type="project" value="InterPro"/>
</dbReference>
<dbReference type="GO" id="GO:0019843">
    <property type="term" value="F:rRNA binding"/>
    <property type="evidence" value="ECO:0007669"/>
    <property type="project" value="UniProtKB-UniRule"/>
</dbReference>
<dbReference type="GO" id="GO:0003735">
    <property type="term" value="F:structural constituent of ribosome"/>
    <property type="evidence" value="ECO:0007669"/>
    <property type="project" value="InterPro"/>
</dbReference>
<dbReference type="GO" id="GO:0016740">
    <property type="term" value="F:transferase activity"/>
    <property type="evidence" value="ECO:0007669"/>
    <property type="project" value="InterPro"/>
</dbReference>
<dbReference type="GO" id="GO:0002181">
    <property type="term" value="P:cytoplasmic translation"/>
    <property type="evidence" value="ECO:0007669"/>
    <property type="project" value="TreeGrafter"/>
</dbReference>
<dbReference type="FunFam" id="2.30.30.30:FF:000001">
    <property type="entry name" value="50S ribosomal protein L2"/>
    <property type="match status" value="1"/>
</dbReference>
<dbReference type="FunFam" id="2.40.50.140:FF:000003">
    <property type="entry name" value="50S ribosomal protein L2"/>
    <property type="match status" value="1"/>
</dbReference>
<dbReference type="FunFam" id="4.10.950.10:FF:000001">
    <property type="entry name" value="50S ribosomal protein L2"/>
    <property type="match status" value="1"/>
</dbReference>
<dbReference type="Gene3D" id="2.30.30.30">
    <property type="match status" value="1"/>
</dbReference>
<dbReference type="Gene3D" id="2.40.50.140">
    <property type="entry name" value="Nucleic acid-binding proteins"/>
    <property type="match status" value="1"/>
</dbReference>
<dbReference type="Gene3D" id="4.10.950.10">
    <property type="entry name" value="Ribosomal protein L2, domain 3"/>
    <property type="match status" value="1"/>
</dbReference>
<dbReference type="HAMAP" id="MF_01320_B">
    <property type="entry name" value="Ribosomal_uL2_B"/>
    <property type="match status" value="1"/>
</dbReference>
<dbReference type="InterPro" id="IPR012340">
    <property type="entry name" value="NA-bd_OB-fold"/>
</dbReference>
<dbReference type="InterPro" id="IPR014722">
    <property type="entry name" value="Rib_uL2_dom2"/>
</dbReference>
<dbReference type="InterPro" id="IPR002171">
    <property type="entry name" value="Ribosomal_uL2"/>
</dbReference>
<dbReference type="InterPro" id="IPR005880">
    <property type="entry name" value="Ribosomal_uL2_bac/org-type"/>
</dbReference>
<dbReference type="InterPro" id="IPR022669">
    <property type="entry name" value="Ribosomal_uL2_C"/>
</dbReference>
<dbReference type="InterPro" id="IPR022671">
    <property type="entry name" value="Ribosomal_uL2_CS"/>
</dbReference>
<dbReference type="InterPro" id="IPR014726">
    <property type="entry name" value="Ribosomal_uL2_dom3"/>
</dbReference>
<dbReference type="InterPro" id="IPR022666">
    <property type="entry name" value="Ribosomal_uL2_RNA-bd_dom"/>
</dbReference>
<dbReference type="InterPro" id="IPR008991">
    <property type="entry name" value="Translation_prot_SH3-like_sf"/>
</dbReference>
<dbReference type="NCBIfam" id="TIGR01171">
    <property type="entry name" value="rplB_bact"/>
    <property type="match status" value="1"/>
</dbReference>
<dbReference type="PANTHER" id="PTHR13691:SF5">
    <property type="entry name" value="LARGE RIBOSOMAL SUBUNIT PROTEIN UL2M"/>
    <property type="match status" value="1"/>
</dbReference>
<dbReference type="PANTHER" id="PTHR13691">
    <property type="entry name" value="RIBOSOMAL PROTEIN L2"/>
    <property type="match status" value="1"/>
</dbReference>
<dbReference type="Pfam" id="PF00181">
    <property type="entry name" value="Ribosomal_L2"/>
    <property type="match status" value="1"/>
</dbReference>
<dbReference type="Pfam" id="PF03947">
    <property type="entry name" value="Ribosomal_L2_C"/>
    <property type="match status" value="1"/>
</dbReference>
<dbReference type="PIRSF" id="PIRSF002158">
    <property type="entry name" value="Ribosomal_L2"/>
    <property type="match status" value="1"/>
</dbReference>
<dbReference type="SMART" id="SM01383">
    <property type="entry name" value="Ribosomal_L2"/>
    <property type="match status" value="1"/>
</dbReference>
<dbReference type="SMART" id="SM01382">
    <property type="entry name" value="Ribosomal_L2_C"/>
    <property type="match status" value="1"/>
</dbReference>
<dbReference type="SUPFAM" id="SSF50249">
    <property type="entry name" value="Nucleic acid-binding proteins"/>
    <property type="match status" value="1"/>
</dbReference>
<dbReference type="SUPFAM" id="SSF50104">
    <property type="entry name" value="Translation proteins SH3-like domain"/>
    <property type="match status" value="1"/>
</dbReference>
<dbReference type="PROSITE" id="PS00467">
    <property type="entry name" value="RIBOSOMAL_L2"/>
    <property type="match status" value="1"/>
</dbReference>
<protein>
    <recommendedName>
        <fullName evidence="1">Large ribosomal subunit protein uL2</fullName>
    </recommendedName>
    <alternativeName>
        <fullName evidence="3">50S ribosomal protein L2</fullName>
    </alternativeName>
</protein>
<name>RL2_GEOTN</name>
<gene>
    <name evidence="1" type="primary">rplB</name>
    <name type="ordered locus">GTNG_0109</name>
</gene>
<comment type="function">
    <text evidence="1">One of the primary rRNA binding proteins. Required for association of the 30S and 50S subunits to form the 70S ribosome, for tRNA binding and peptide bond formation. It has been suggested to have peptidyltransferase activity; this is somewhat controversial. Makes several contacts with the 16S rRNA in the 70S ribosome.</text>
</comment>
<comment type="subunit">
    <text evidence="1">Part of the 50S ribosomal subunit. Forms a bridge to the 30S subunit in the 70S ribosome.</text>
</comment>
<comment type="similarity">
    <text evidence="1">Belongs to the universal ribosomal protein uL2 family.</text>
</comment>
<keyword id="KW-0687">Ribonucleoprotein</keyword>
<keyword id="KW-0689">Ribosomal protein</keyword>
<keyword id="KW-0694">RNA-binding</keyword>
<keyword id="KW-0699">rRNA-binding</keyword>
<evidence type="ECO:0000255" key="1">
    <source>
        <dbReference type="HAMAP-Rule" id="MF_01320"/>
    </source>
</evidence>
<evidence type="ECO:0000256" key="2">
    <source>
        <dbReference type="SAM" id="MobiDB-lite"/>
    </source>
</evidence>
<evidence type="ECO:0000305" key="3"/>
<accession>A4IJJ2</accession>
<proteinExistence type="inferred from homology"/>